<organism>
    <name type="scientific">Bombyx mori</name>
    <name type="common">Silk moth</name>
    <dbReference type="NCBI Taxonomy" id="7091"/>
    <lineage>
        <taxon>Eukaryota</taxon>
        <taxon>Metazoa</taxon>
        <taxon>Ecdysozoa</taxon>
        <taxon>Arthropoda</taxon>
        <taxon>Hexapoda</taxon>
        <taxon>Insecta</taxon>
        <taxon>Pterygota</taxon>
        <taxon>Neoptera</taxon>
        <taxon>Endopterygota</taxon>
        <taxon>Lepidoptera</taxon>
        <taxon>Glossata</taxon>
        <taxon>Ditrysia</taxon>
        <taxon>Bombycoidea</taxon>
        <taxon>Bombycidae</taxon>
        <taxon>Bombycinae</taxon>
        <taxon>Bombyx</taxon>
    </lineage>
</organism>
<evidence type="ECO:0000250" key="1">
    <source>
        <dbReference type="UniProtKB" id="Q0KHY3"/>
    </source>
</evidence>
<evidence type="ECO:0000255" key="2"/>
<evidence type="ECO:0000255" key="3">
    <source>
        <dbReference type="PROSITE-ProRule" id="PRU00302"/>
    </source>
</evidence>
<evidence type="ECO:0000255" key="4">
    <source>
        <dbReference type="PROSITE-ProRule" id="PRU00347"/>
    </source>
</evidence>
<evidence type="ECO:0000255" key="5">
    <source>
        <dbReference type="PROSITE-ProRule" id="PRU00570"/>
    </source>
</evidence>
<evidence type="ECO:0000255" key="6">
    <source>
        <dbReference type="PROSITE-ProRule" id="PRU00580"/>
    </source>
</evidence>
<evidence type="ECO:0000256" key="7">
    <source>
        <dbReference type="SAM" id="MobiDB-lite"/>
    </source>
</evidence>
<evidence type="ECO:0000269" key="8">
    <source>
    </source>
</evidence>
<evidence type="ECO:0000303" key="9">
    <source>
    </source>
</evidence>
<evidence type="ECO:0000305" key="10"/>
<reference key="1">
    <citation type="journal article" date="2008" name="Insect Biochem. Mol. Biol.">
        <title>The genome of a lepidopteran model insect, the silkworm Bombyx mori.</title>
        <authorList>
            <consortium name="International Silkworm Genome Consortium"/>
        </authorList>
    </citation>
    <scope>NUCLEOTIDE SEQUENCE [LARGE SCALE GENOMIC DNA]</scope>
    <source>
        <strain>p50T</strain>
    </source>
</reference>
<reference evidence="10" key="2">
    <citation type="journal article" date="2012" name="J. Cell Sci.">
        <title>A novel protein complex, Mesh-Ssk, is required for septate junction formation in the Drosophila midgut.</title>
        <authorList>
            <person name="Izumi Y."/>
            <person name="Yanagihashi Y."/>
            <person name="Furuse M."/>
        </authorList>
    </citation>
    <scope>IDENTIFICATION BY MASS SPECTROMETRY</scope>
    <scope>SUBCELLULAR LOCATION</scope>
    <scope>TISSUE SPECIFICITY</scope>
</reference>
<feature type="signal peptide" evidence="2">
    <location>
        <begin position="1"/>
        <end position="21"/>
    </location>
</feature>
<feature type="chain" id="PRO_0000423947" description="Protein mesh" evidence="2">
    <location>
        <begin position="22"/>
        <end position="1583"/>
    </location>
</feature>
<feature type="topological domain" description="Extracellular" evidence="2">
    <location>
        <begin position="22"/>
        <end position="1182"/>
    </location>
</feature>
<feature type="transmembrane region" description="Helical" evidence="2">
    <location>
        <begin position="1183"/>
        <end position="1203"/>
    </location>
</feature>
<feature type="topological domain" description="Cytoplasmic" evidence="2">
    <location>
        <begin position="1204"/>
        <end position="1472"/>
    </location>
</feature>
<feature type="transmembrane region" description="Helical" evidence="2">
    <location>
        <begin position="1473"/>
        <end position="1493"/>
    </location>
</feature>
<feature type="topological domain" description="Extracellular" evidence="2">
    <location>
        <begin position="1494"/>
        <end position="1583"/>
    </location>
</feature>
<feature type="domain" description="NIDO" evidence="5">
    <location>
        <begin position="260"/>
        <end position="415"/>
    </location>
</feature>
<feature type="domain" description="AMOP" evidence="4">
    <location>
        <begin position="647"/>
        <end position="798"/>
    </location>
</feature>
<feature type="domain" description="VWFD" evidence="6">
    <location>
        <begin position="811"/>
        <end position="1019"/>
    </location>
</feature>
<feature type="domain" description="Sushi" evidence="3">
    <location>
        <begin position="1110"/>
        <end position="1170"/>
    </location>
</feature>
<feature type="region of interest" description="Disordered" evidence="7">
    <location>
        <begin position="1232"/>
        <end position="1448"/>
    </location>
</feature>
<feature type="region of interest" description="Disordered" evidence="7">
    <location>
        <begin position="1521"/>
        <end position="1583"/>
    </location>
</feature>
<feature type="compositionally biased region" description="Polar residues" evidence="7">
    <location>
        <begin position="1232"/>
        <end position="1250"/>
    </location>
</feature>
<feature type="compositionally biased region" description="Basic and acidic residues" evidence="7">
    <location>
        <begin position="1291"/>
        <end position="1300"/>
    </location>
</feature>
<feature type="compositionally biased region" description="Polar residues" evidence="7">
    <location>
        <begin position="1405"/>
        <end position="1416"/>
    </location>
</feature>
<feature type="compositionally biased region" description="Basic and acidic residues" evidence="7">
    <location>
        <begin position="1521"/>
        <end position="1539"/>
    </location>
</feature>
<feature type="disulfide bond" evidence="1">
    <location>
        <begin position="1112"/>
        <end position="1152"/>
    </location>
</feature>
<feature type="disulfide bond" evidence="1">
    <location>
        <begin position="1138"/>
        <end position="1168"/>
    </location>
</feature>
<sequence>MGVKIKLVLAVVLILSANVLGQDEIVNDTESTVSVTEAQVVELETDVKEKEDETFEETSPVELLPDTENLEVRSGKYQLNDGLVGEEPVNLEAVDFNSNNVESEKQLLSPPSTTVVTGTDYSYIDGRVLPATTYQNNGQPYVITTQRLQQIRSNFMYWFYDQGGSDNIGDYQRDIHTSTPQIHKNFNFQLPFFGFRFNYTRISMNGYIYFSDPPDHYTYPLSFPVRDWPNINDPSFIGIFFSKCRIGNMRPEEPDPRRPGIYFRLDRDLQTRTDQLGVEMRERVTWDIREGVIGSETFFPKHTITITWKNMSFAGGIDNSLFMTNTFQMVLATDEVFTYAIFNYLEINWSSHTEAGGDTTTGEGGIPAYIGFNAGNGTRSYEYKPYSQASVLRDLTGRGWANGFPGRHIFRIDENILMGTCNKDIDGANLPLMFAPESGNMLGGTIVNITGPCFNPNDRITCRFDTESVLGAVVDVNRAICVQPRFWHNGYARFEVAINNEPYKWKGRYFVETPATATEKIFFPDNSVHERYPPEVRITWDRFNLTTNLNVQLQISLWGYKEVTIRPQLEYIDMIEVGVANTGEYVINPQNFRNRENIMHNDMQFGFLQINLTTPEVFKGVPISPILWSRPIPLGWYFAPQWERLHGQRWSNSMCNNWLRTDRFLKNFAAQVWVCPCTLEHALLDKGRFMPDLDCDRDTNPTCRYHWGGIHCVRSGAPSSEGSGQQCCYDKNGFLMLSYDQMWGSKPSRSHDFGFTPYNEANKVPSLSRWFHDMIPFYQCCLWQEEQAVGCETFRFERRPSQDCVAYQSPGVAGIFGDPHIVTFDDLQYTFNGKGEYVLVRVDHSQLKLDVQGRFEQVPRNIHGAVNATHLTSVVAASNNSQTIEVRLRPQHAQWRYRLDVFANGKRVYFDRTALRVQYFPGVTVYQPMYVLNQSEIVVMFSSGAGLEVVENRGFMTARVYLPWTFMNQTRGLFGNWSLDVNDDFTRPDGTLASVDLNNFQSAHRDFAQHWQLTDREQRDIGVAMFVREYGRTAAYYNDNEFIPNFIREPANFLPVNRSHDVTRAIEICQDSYQCRYDYGMTLNRDMAEFTKNYLSSITNIKEQNARRVISCGILETPRFGRKSNFFFTPGTRVNFECNQDFILTGDKRRVCEDNGRWNLPDYGYTECLRQQEFSQRALFLTWGVIVAVILPLGLLICLLWFWCWHKPRSEGKEGFRFEDLPRSKSASRLNLRSSSMGNITDTMKSSTIPGSEKKSPETPTEETPARIVGRSVLAPPADGDSSGIGYPDSGKSDSGKSDKSSGLPKKRRAYDKTYRTNEPLPNAPDVEFPEKLWDLSEEDLLSLTSPSDSESNRDSTLTRPAKDIQYLNKPRQTGRQAIPSDSGYSTKEGSEDPYAPKFDDQYSPIPSQYSPTYSEIYSPPISPASDSSPRNTYNNPGIPEAPKSAPVDGIKTFTMPTNKGKQEYSSRTLGATWGIISAVMLPIIIILICVAWRILQRRKAEEREENEFLDVKTRAIDPDDSVKVTSDDESIPYKKDVTEETPEPTEGVQAVEPSNPNYNYGRPYVDLQPGQPRQWGGETEIN</sequence>
<comment type="function">
    <text evidence="1">May be required for the proper organization of smooth septate junctions and for the barrier function of the midgut epithelium.</text>
</comment>
<comment type="subcellular location">
    <subcellularLocation>
        <location evidence="2">Membrane</location>
        <topology evidence="2">Multi-pass membrane protein</topology>
    </subcellularLocation>
    <subcellularLocation>
        <location evidence="1 2">Cell junction</location>
        <location evidence="1 2">Septate junction</location>
    </subcellularLocation>
    <subcellularLocation>
        <location evidence="8">Lateral cell membrane</location>
    </subcellularLocation>
</comment>
<comment type="tissue specificity">
    <text evidence="8">In fifth instar larvae, expressed in midgut epithelial cells (at protein level).</text>
</comment>
<dbReference type="FunCoup" id="H9JIQ1">
    <property type="interactions" value="6"/>
</dbReference>
<dbReference type="STRING" id="7091.H9JIQ1"/>
<dbReference type="PaxDb" id="7091-BGIBMGA009402-TA"/>
<dbReference type="eggNOG" id="KOG4291">
    <property type="taxonomic scope" value="Eukaryota"/>
</dbReference>
<dbReference type="HOGENOM" id="CLU_003648_1_0_1"/>
<dbReference type="InParanoid" id="H9JIQ1"/>
<dbReference type="OMA" id="NPRWPEQ"/>
<dbReference type="OrthoDB" id="6406881at2759"/>
<dbReference type="Proteomes" id="UP000005204">
    <property type="component" value="Unassembled WGS sequence"/>
</dbReference>
<dbReference type="GO" id="GO:0016328">
    <property type="term" value="C:lateral plasma membrane"/>
    <property type="evidence" value="ECO:0007669"/>
    <property type="project" value="UniProtKB-SubCell"/>
</dbReference>
<dbReference type="GO" id="GO:0005918">
    <property type="term" value="C:septate junction"/>
    <property type="evidence" value="ECO:0007669"/>
    <property type="project" value="UniProtKB-SubCell"/>
</dbReference>
<dbReference type="GO" id="GO:0007160">
    <property type="term" value="P:cell-matrix adhesion"/>
    <property type="evidence" value="ECO:0007669"/>
    <property type="project" value="InterPro"/>
</dbReference>
<dbReference type="CDD" id="cd00033">
    <property type="entry name" value="CCP"/>
    <property type="match status" value="1"/>
</dbReference>
<dbReference type="Gene3D" id="2.10.70.10">
    <property type="entry name" value="Complement Module, domain 1"/>
    <property type="match status" value="1"/>
</dbReference>
<dbReference type="Gene3D" id="2.60.40.10">
    <property type="entry name" value="Immunoglobulins"/>
    <property type="match status" value="1"/>
</dbReference>
<dbReference type="InterPro" id="IPR005533">
    <property type="entry name" value="AMOP_dom"/>
</dbReference>
<dbReference type="InterPro" id="IPR056619">
    <property type="entry name" value="C8-3_MUC4"/>
</dbReference>
<dbReference type="InterPro" id="IPR051495">
    <property type="entry name" value="Epithelial_Barrier/Signaling"/>
</dbReference>
<dbReference type="InterPro" id="IPR013783">
    <property type="entry name" value="Ig-like_fold"/>
</dbReference>
<dbReference type="InterPro" id="IPR014756">
    <property type="entry name" value="Ig_E-set"/>
</dbReference>
<dbReference type="InterPro" id="IPR003886">
    <property type="entry name" value="NIDO_dom"/>
</dbReference>
<dbReference type="InterPro" id="IPR035976">
    <property type="entry name" value="Sushi/SCR/CCP_sf"/>
</dbReference>
<dbReference type="InterPro" id="IPR000436">
    <property type="entry name" value="Sushi_SCR_CCP_dom"/>
</dbReference>
<dbReference type="InterPro" id="IPR001846">
    <property type="entry name" value="VWF_type-D"/>
</dbReference>
<dbReference type="PANTHER" id="PTHR13802">
    <property type="entry name" value="MUCIN 4-RELATED"/>
    <property type="match status" value="1"/>
</dbReference>
<dbReference type="PANTHER" id="PTHR13802:SF52">
    <property type="entry name" value="MUCIN-4"/>
    <property type="match status" value="1"/>
</dbReference>
<dbReference type="Pfam" id="PF03782">
    <property type="entry name" value="AMOP"/>
    <property type="match status" value="1"/>
</dbReference>
<dbReference type="Pfam" id="PF23263">
    <property type="entry name" value="C8-3_MUC4"/>
    <property type="match status" value="1"/>
</dbReference>
<dbReference type="Pfam" id="PF06119">
    <property type="entry name" value="NIDO"/>
    <property type="match status" value="1"/>
</dbReference>
<dbReference type="Pfam" id="PF00084">
    <property type="entry name" value="Sushi"/>
    <property type="match status" value="1"/>
</dbReference>
<dbReference type="Pfam" id="PF00094">
    <property type="entry name" value="VWD"/>
    <property type="match status" value="1"/>
</dbReference>
<dbReference type="SMART" id="SM00723">
    <property type="entry name" value="AMOP"/>
    <property type="match status" value="1"/>
</dbReference>
<dbReference type="SMART" id="SM00032">
    <property type="entry name" value="CCP"/>
    <property type="match status" value="1"/>
</dbReference>
<dbReference type="SMART" id="SM00539">
    <property type="entry name" value="NIDO"/>
    <property type="match status" value="1"/>
</dbReference>
<dbReference type="SMART" id="SM00216">
    <property type="entry name" value="VWD"/>
    <property type="match status" value="1"/>
</dbReference>
<dbReference type="SUPFAM" id="SSF57535">
    <property type="entry name" value="Complement control module/SCR domain"/>
    <property type="match status" value="1"/>
</dbReference>
<dbReference type="SUPFAM" id="SSF81296">
    <property type="entry name" value="E set domains"/>
    <property type="match status" value="1"/>
</dbReference>
<dbReference type="PROSITE" id="PS50856">
    <property type="entry name" value="AMOP"/>
    <property type="match status" value="1"/>
</dbReference>
<dbReference type="PROSITE" id="PS51220">
    <property type="entry name" value="NIDO"/>
    <property type="match status" value="1"/>
</dbReference>
<dbReference type="PROSITE" id="PS50923">
    <property type="entry name" value="SUSHI"/>
    <property type="match status" value="1"/>
</dbReference>
<dbReference type="PROSITE" id="PS51233">
    <property type="entry name" value="VWFD"/>
    <property type="match status" value="1"/>
</dbReference>
<accession>H9JIQ1</accession>
<keyword id="KW-0965">Cell junction</keyword>
<keyword id="KW-1003">Cell membrane</keyword>
<keyword id="KW-1015">Disulfide bond</keyword>
<keyword id="KW-0472">Membrane</keyword>
<keyword id="KW-0597">Phosphoprotein</keyword>
<keyword id="KW-1185">Reference proteome</keyword>
<keyword id="KW-0732">Signal</keyword>
<keyword id="KW-0768">Sushi</keyword>
<keyword id="KW-0812">Transmembrane</keyword>
<keyword id="KW-1133">Transmembrane helix</keyword>
<protein>
    <recommendedName>
        <fullName evidence="9">Protein mesh</fullName>
    </recommendedName>
</protein>
<name>MESH_BOMMO</name>
<proteinExistence type="evidence at protein level"/>